<evidence type="ECO:0000255" key="1">
    <source>
        <dbReference type="HAMAP-Rule" id="MF_01589"/>
    </source>
</evidence>
<accession>Q7N555</accession>
<comment type="function">
    <text evidence="1">Catalyzes the conversion of S-adenosyl-L-methionine (SAM) to carboxy-S-adenosyl-L-methionine (Cx-SAM).</text>
</comment>
<comment type="catalytic activity">
    <reaction evidence="1">
        <text>prephenate + S-adenosyl-L-methionine = carboxy-S-adenosyl-L-methionine + 3-phenylpyruvate + H2O</text>
        <dbReference type="Rhea" id="RHEA:51692"/>
        <dbReference type="ChEBI" id="CHEBI:15377"/>
        <dbReference type="ChEBI" id="CHEBI:18005"/>
        <dbReference type="ChEBI" id="CHEBI:29934"/>
        <dbReference type="ChEBI" id="CHEBI:59789"/>
        <dbReference type="ChEBI" id="CHEBI:134278"/>
    </reaction>
</comment>
<comment type="subunit">
    <text evidence="1">Homodimer.</text>
</comment>
<comment type="similarity">
    <text evidence="1">Belongs to the class I-like SAM-binding methyltransferase superfamily. Cx-SAM synthase family.</text>
</comment>
<proteinExistence type="inferred from homology"/>
<protein>
    <recommendedName>
        <fullName evidence="1">Carboxy-S-adenosyl-L-methionine synthase</fullName>
        <shortName evidence="1">Cx-SAM synthase</shortName>
        <ecNumber evidence="1">2.1.3.-</ecNumber>
    </recommendedName>
</protein>
<keyword id="KW-1185">Reference proteome</keyword>
<keyword id="KW-0949">S-adenosyl-L-methionine</keyword>
<keyword id="KW-0808">Transferase</keyword>
<sequence length="252" mass="28585">MSNQDPHHQRDSLFATPIANLGDWRFDERVAEVFPDMIQRSVPGYSNIVSMIGMLAGRFVTSNSQIYDMGCSLGASTLAMRRNIVAENCKIIAVDNSPAMVERCRRHIDAFRSQTPVEVIEADILNIDIQNASMVVLNFTLQFLNPQDRQGLLNRIYQGLRPGGVLVLSEKFSFEDQQIGELLFNMHHDFKRANGYSELEISQKRSMLENVMLTDSVETHKSRLHQSGFNHVEVWFQCFNFGSLLAIKGADE</sequence>
<gene>
    <name evidence="1" type="primary">cmoA</name>
    <name type="ordered locus">plu2103</name>
</gene>
<reference key="1">
    <citation type="journal article" date="2003" name="Nat. Biotechnol.">
        <title>The genome sequence of the entomopathogenic bacterium Photorhabdus luminescens.</title>
        <authorList>
            <person name="Duchaud E."/>
            <person name="Rusniok C."/>
            <person name="Frangeul L."/>
            <person name="Buchrieser C."/>
            <person name="Givaudan A."/>
            <person name="Taourit S."/>
            <person name="Bocs S."/>
            <person name="Boursaux-Eude C."/>
            <person name="Chandler M."/>
            <person name="Charles J.-F."/>
            <person name="Dassa E."/>
            <person name="Derose R."/>
            <person name="Derzelle S."/>
            <person name="Freyssinet G."/>
            <person name="Gaudriault S."/>
            <person name="Medigue C."/>
            <person name="Lanois A."/>
            <person name="Powell K."/>
            <person name="Siguier P."/>
            <person name="Vincent R."/>
            <person name="Wingate V."/>
            <person name="Zouine M."/>
            <person name="Glaser P."/>
            <person name="Boemare N."/>
            <person name="Danchin A."/>
            <person name="Kunst F."/>
        </authorList>
    </citation>
    <scope>NUCLEOTIDE SEQUENCE [LARGE SCALE GENOMIC DNA]</scope>
    <source>
        <strain>DSM 15139 / CIP 105565 / TT01</strain>
    </source>
</reference>
<feature type="chain" id="PRO_0000314353" description="Carboxy-S-adenosyl-L-methionine synthase">
    <location>
        <begin position="1"/>
        <end position="252"/>
    </location>
</feature>
<feature type="binding site" evidence="1">
    <location>
        <position position="45"/>
    </location>
    <ligand>
        <name>S-adenosyl-L-methionine</name>
        <dbReference type="ChEBI" id="CHEBI:59789"/>
    </ligand>
</feature>
<feature type="binding site" evidence="1">
    <location>
        <begin position="70"/>
        <end position="72"/>
    </location>
    <ligand>
        <name>S-adenosyl-L-methionine</name>
        <dbReference type="ChEBI" id="CHEBI:59789"/>
    </ligand>
</feature>
<feature type="binding site" evidence="1">
    <location>
        <begin position="95"/>
        <end position="96"/>
    </location>
    <ligand>
        <name>S-adenosyl-L-methionine</name>
        <dbReference type="ChEBI" id="CHEBI:59789"/>
    </ligand>
</feature>
<feature type="binding site" evidence="1">
    <location>
        <begin position="123"/>
        <end position="124"/>
    </location>
    <ligand>
        <name>S-adenosyl-L-methionine</name>
        <dbReference type="ChEBI" id="CHEBI:59789"/>
    </ligand>
</feature>
<feature type="binding site" evidence="1">
    <location>
        <position position="138"/>
    </location>
    <ligand>
        <name>S-adenosyl-L-methionine</name>
        <dbReference type="ChEBI" id="CHEBI:59789"/>
    </ligand>
</feature>
<feature type="binding site" evidence="1">
    <location>
        <position position="205"/>
    </location>
    <ligand>
        <name>S-adenosyl-L-methionine</name>
        <dbReference type="ChEBI" id="CHEBI:59789"/>
    </ligand>
</feature>
<organism>
    <name type="scientific">Photorhabdus laumondii subsp. laumondii (strain DSM 15139 / CIP 105565 / TT01)</name>
    <name type="common">Photorhabdus luminescens subsp. laumondii</name>
    <dbReference type="NCBI Taxonomy" id="243265"/>
    <lineage>
        <taxon>Bacteria</taxon>
        <taxon>Pseudomonadati</taxon>
        <taxon>Pseudomonadota</taxon>
        <taxon>Gammaproteobacteria</taxon>
        <taxon>Enterobacterales</taxon>
        <taxon>Morganellaceae</taxon>
        <taxon>Photorhabdus</taxon>
    </lineage>
</organism>
<dbReference type="EC" id="2.1.3.-" evidence="1"/>
<dbReference type="EMBL" id="BX571866">
    <property type="protein sequence ID" value="CAE14396.1"/>
    <property type="molecule type" value="Genomic_DNA"/>
</dbReference>
<dbReference type="RefSeq" id="WP_011146357.1">
    <property type="nucleotide sequence ID" value="NC_005126.1"/>
</dbReference>
<dbReference type="SMR" id="Q7N555"/>
<dbReference type="STRING" id="243265.plu2103"/>
<dbReference type="GeneID" id="48848382"/>
<dbReference type="KEGG" id="plu:plu2103"/>
<dbReference type="eggNOG" id="COG2226">
    <property type="taxonomic scope" value="Bacteria"/>
</dbReference>
<dbReference type="HOGENOM" id="CLU_078475_0_0_6"/>
<dbReference type="OrthoDB" id="9779941at2"/>
<dbReference type="Proteomes" id="UP000002514">
    <property type="component" value="Chromosome"/>
</dbReference>
<dbReference type="GO" id="GO:0016743">
    <property type="term" value="F:carboxyl- or carbamoyltransferase activity"/>
    <property type="evidence" value="ECO:0007669"/>
    <property type="project" value="UniProtKB-UniRule"/>
</dbReference>
<dbReference type="GO" id="GO:1904047">
    <property type="term" value="F:S-adenosyl-L-methionine binding"/>
    <property type="evidence" value="ECO:0007669"/>
    <property type="project" value="UniProtKB-UniRule"/>
</dbReference>
<dbReference type="GO" id="GO:0002098">
    <property type="term" value="P:tRNA wobble uridine modification"/>
    <property type="evidence" value="ECO:0007669"/>
    <property type="project" value="InterPro"/>
</dbReference>
<dbReference type="CDD" id="cd02440">
    <property type="entry name" value="AdoMet_MTases"/>
    <property type="match status" value="1"/>
</dbReference>
<dbReference type="Gene3D" id="3.40.50.150">
    <property type="entry name" value="Vaccinia Virus protein VP39"/>
    <property type="match status" value="1"/>
</dbReference>
<dbReference type="HAMAP" id="MF_01589">
    <property type="entry name" value="Cx_SAM_synthase"/>
    <property type="match status" value="1"/>
</dbReference>
<dbReference type="InterPro" id="IPR005271">
    <property type="entry name" value="CmoA"/>
</dbReference>
<dbReference type="InterPro" id="IPR041698">
    <property type="entry name" value="Methyltransf_25"/>
</dbReference>
<dbReference type="InterPro" id="IPR029063">
    <property type="entry name" value="SAM-dependent_MTases_sf"/>
</dbReference>
<dbReference type="NCBIfam" id="TIGR00740">
    <property type="entry name" value="carboxy-S-adenosyl-L-methionine synthase CmoA"/>
    <property type="match status" value="1"/>
</dbReference>
<dbReference type="NCBIfam" id="NF011995">
    <property type="entry name" value="PRK15451.1"/>
    <property type="match status" value="1"/>
</dbReference>
<dbReference type="PANTHER" id="PTHR43861:SF2">
    <property type="entry name" value="CARBOXY-S-ADENOSYL-L-METHIONINE SYNTHASE"/>
    <property type="match status" value="1"/>
</dbReference>
<dbReference type="PANTHER" id="PTHR43861">
    <property type="entry name" value="TRANS-ACONITATE 2-METHYLTRANSFERASE-RELATED"/>
    <property type="match status" value="1"/>
</dbReference>
<dbReference type="Pfam" id="PF13649">
    <property type="entry name" value="Methyltransf_25"/>
    <property type="match status" value="1"/>
</dbReference>
<dbReference type="PIRSF" id="PIRSF006325">
    <property type="entry name" value="MeTrfase_bac"/>
    <property type="match status" value="1"/>
</dbReference>
<dbReference type="SUPFAM" id="SSF53335">
    <property type="entry name" value="S-adenosyl-L-methionine-dependent methyltransferases"/>
    <property type="match status" value="1"/>
</dbReference>
<name>CMOA_PHOLL</name>